<proteinExistence type="inferred from homology"/>
<accession>P12404</accession>
<keyword id="KW-0066">ATP synthesis</keyword>
<keyword id="KW-0138">CF(0)</keyword>
<keyword id="KW-0375">Hydrogen ion transport</keyword>
<keyword id="KW-0406">Ion transport</keyword>
<keyword id="KW-0472">Membrane</keyword>
<keyword id="KW-1185">Reference proteome</keyword>
<keyword id="KW-0793">Thylakoid</keyword>
<keyword id="KW-0812">Transmembrane</keyword>
<keyword id="KW-1133">Transmembrane helix</keyword>
<keyword id="KW-0813">Transport</keyword>
<comment type="function">
    <text evidence="1">Key component of the proton channel; it plays a direct role in the translocation of protons across the membrane.</text>
</comment>
<comment type="subunit">
    <text evidence="1">F-type ATPases have 2 components, CF(1) - the catalytic core - and CF(0) - the membrane proton channel. CF(1) has five subunits: alpha(3), beta(3), gamma(1), delta(1), epsilon(1). CF(0) has four main subunits: a, b, b' and c.</text>
</comment>
<comment type="subcellular location">
    <subcellularLocation>
        <location evidence="1">Cellular thylakoid membrane</location>
        <topology evidence="1">Multi-pass membrane protein</topology>
    </subcellularLocation>
</comment>
<comment type="similarity">
    <text evidence="1">Belongs to the ATPase A chain family.</text>
</comment>
<feature type="chain" id="PRO_0000082040" description="ATP synthase subunit a">
    <location>
        <begin position="1"/>
        <end position="251"/>
    </location>
</feature>
<feature type="transmembrane region" description="Helical" evidence="1">
    <location>
        <begin position="34"/>
        <end position="54"/>
    </location>
</feature>
<feature type="transmembrane region" description="Helical" evidence="1">
    <location>
        <begin position="93"/>
        <end position="113"/>
    </location>
</feature>
<feature type="transmembrane region" description="Helical" evidence="1">
    <location>
        <begin position="130"/>
        <end position="150"/>
    </location>
</feature>
<feature type="transmembrane region" description="Helical" evidence="1">
    <location>
        <begin position="195"/>
        <end position="215"/>
    </location>
</feature>
<feature type="transmembrane region" description="Helical" evidence="1">
    <location>
        <begin position="216"/>
        <end position="236"/>
    </location>
</feature>
<feature type="sequence conflict" description="In Ref. 1; AAA21986." evidence="2" ref="1">
    <original>G</original>
    <variation>A</variation>
    <location>
        <position position="198"/>
    </location>
</feature>
<feature type="sequence conflict" description="In Ref. 1; AAA21986." evidence="2" ref="1">
    <original>LG</original>
    <variation>FP</variation>
    <location>
        <begin position="215"/>
        <end position="216"/>
    </location>
</feature>
<gene>
    <name evidence="1" type="primary">atpB</name>
    <name evidence="1" type="synonym">atpI</name>
    <name type="ordered locus">all0010</name>
</gene>
<name>ATP6_NOSS1</name>
<reference key="1">
    <citation type="journal article" date="1988" name="J. Bacteriol.">
        <title>Genes encoding the alpha, gamma, delta, and four F0 subunits of ATP synthase constitute an operon in the cyanobacterium Anabaena sp. strain PCC 7120.</title>
        <authorList>
            <person name="McCarn D.F."/>
            <person name="Whitaker R.A."/>
            <person name="Alam J."/>
            <person name="Vrba J.M."/>
            <person name="Curtis S.E."/>
        </authorList>
    </citation>
    <scope>NUCLEOTIDE SEQUENCE [GENOMIC DNA]</scope>
</reference>
<reference key="2">
    <citation type="journal article" date="2001" name="DNA Res.">
        <title>Complete genomic sequence of the filamentous nitrogen-fixing cyanobacterium Anabaena sp. strain PCC 7120.</title>
        <authorList>
            <person name="Kaneko T."/>
            <person name="Nakamura Y."/>
            <person name="Wolk C.P."/>
            <person name="Kuritz T."/>
            <person name="Sasamoto S."/>
            <person name="Watanabe A."/>
            <person name="Iriguchi M."/>
            <person name="Ishikawa A."/>
            <person name="Kawashima K."/>
            <person name="Kimura T."/>
            <person name="Kishida Y."/>
            <person name="Kohara M."/>
            <person name="Matsumoto M."/>
            <person name="Matsuno A."/>
            <person name="Muraki A."/>
            <person name="Nakazaki N."/>
            <person name="Shimpo S."/>
            <person name="Sugimoto M."/>
            <person name="Takazawa M."/>
            <person name="Yamada M."/>
            <person name="Yasuda M."/>
            <person name="Tabata S."/>
        </authorList>
    </citation>
    <scope>NUCLEOTIDE SEQUENCE [LARGE SCALE GENOMIC DNA]</scope>
    <source>
        <strain>PCC 7120 / SAG 25.82 / UTEX 2576</strain>
    </source>
</reference>
<sequence>MLNFLNFYSVPLAELEVGKHLYWQIGNLKLHGQVFLTSWFVIGVLVLASVAASSNVKRIPSGIQNLLEYALEFIRDLAKNQIGEKEYRPWVPFVGTLFLFIFVSNWSGALVPFKLIHLPEGELTAPTSDINTTVALALLTSLAYFYAGFSKKGLGYFGNYVQPVSFMLPFKIIEDFTKPLSLSFRLFGNILADELVVGVLVLLVPLFVPLPVMALGLFTSAIQALIFATLAAAYIGEAMEDHHGEEHEEHH</sequence>
<organism>
    <name type="scientific">Nostoc sp. (strain PCC 7120 / SAG 25.82 / UTEX 2576)</name>
    <dbReference type="NCBI Taxonomy" id="103690"/>
    <lineage>
        <taxon>Bacteria</taxon>
        <taxon>Bacillati</taxon>
        <taxon>Cyanobacteriota</taxon>
        <taxon>Cyanophyceae</taxon>
        <taxon>Nostocales</taxon>
        <taxon>Nostocaceae</taxon>
        <taxon>Nostoc</taxon>
    </lineage>
</organism>
<protein>
    <recommendedName>
        <fullName evidence="1">ATP synthase subunit a</fullName>
    </recommendedName>
    <alternativeName>
        <fullName evidence="1">ATP synthase F0 sector subunit a</fullName>
    </alternativeName>
    <alternativeName>
        <fullName evidence="1">F-ATPase subunit 6</fullName>
    </alternativeName>
</protein>
<evidence type="ECO:0000255" key="1">
    <source>
        <dbReference type="HAMAP-Rule" id="MF_01393"/>
    </source>
</evidence>
<evidence type="ECO:0000305" key="2"/>
<dbReference type="EMBL" id="AF242564">
    <property type="protein sequence ID" value="AAA21986.1"/>
    <property type="molecule type" value="Genomic_DNA"/>
</dbReference>
<dbReference type="EMBL" id="BA000019">
    <property type="protein sequence ID" value="BAB77534.1"/>
    <property type="molecule type" value="Genomic_DNA"/>
</dbReference>
<dbReference type="PIR" id="AB1808">
    <property type="entry name" value="AB1808"/>
</dbReference>
<dbReference type="PIR" id="B31090">
    <property type="entry name" value="B31090"/>
</dbReference>
<dbReference type="RefSeq" id="WP_010994187.1">
    <property type="nucleotide sequence ID" value="NZ_RSCN01000005.1"/>
</dbReference>
<dbReference type="SMR" id="P12404"/>
<dbReference type="STRING" id="103690.gene:10492014"/>
<dbReference type="KEGG" id="ana:all0010"/>
<dbReference type="eggNOG" id="COG0356">
    <property type="taxonomic scope" value="Bacteria"/>
</dbReference>
<dbReference type="OrthoDB" id="9789241at2"/>
<dbReference type="Proteomes" id="UP000002483">
    <property type="component" value="Chromosome"/>
</dbReference>
<dbReference type="GO" id="GO:0031676">
    <property type="term" value="C:plasma membrane-derived thylakoid membrane"/>
    <property type="evidence" value="ECO:0007669"/>
    <property type="project" value="UniProtKB-SubCell"/>
</dbReference>
<dbReference type="GO" id="GO:0045259">
    <property type="term" value="C:proton-transporting ATP synthase complex"/>
    <property type="evidence" value="ECO:0007669"/>
    <property type="project" value="UniProtKB-KW"/>
</dbReference>
<dbReference type="GO" id="GO:0046933">
    <property type="term" value="F:proton-transporting ATP synthase activity, rotational mechanism"/>
    <property type="evidence" value="ECO:0007669"/>
    <property type="project" value="UniProtKB-UniRule"/>
</dbReference>
<dbReference type="CDD" id="cd00310">
    <property type="entry name" value="ATP-synt_Fo_a_6"/>
    <property type="match status" value="1"/>
</dbReference>
<dbReference type="FunFam" id="1.20.120.220:FF:000001">
    <property type="entry name" value="ATP synthase subunit a, chloroplastic"/>
    <property type="match status" value="1"/>
</dbReference>
<dbReference type="Gene3D" id="1.20.120.220">
    <property type="entry name" value="ATP synthase, F0 complex, subunit A"/>
    <property type="match status" value="1"/>
</dbReference>
<dbReference type="HAMAP" id="MF_01393">
    <property type="entry name" value="ATP_synth_a_bact"/>
    <property type="match status" value="1"/>
</dbReference>
<dbReference type="InterPro" id="IPR045082">
    <property type="entry name" value="ATP_syn_F0_a_bact/chloroplast"/>
</dbReference>
<dbReference type="InterPro" id="IPR000568">
    <property type="entry name" value="ATP_synth_F0_asu"/>
</dbReference>
<dbReference type="InterPro" id="IPR023011">
    <property type="entry name" value="ATP_synth_F0_asu_AS"/>
</dbReference>
<dbReference type="InterPro" id="IPR035908">
    <property type="entry name" value="F0_ATP_A_sf"/>
</dbReference>
<dbReference type="NCBIfam" id="TIGR01131">
    <property type="entry name" value="ATP_synt_6_or_A"/>
    <property type="match status" value="1"/>
</dbReference>
<dbReference type="PANTHER" id="PTHR42823">
    <property type="entry name" value="ATP SYNTHASE SUBUNIT A, CHLOROPLASTIC"/>
    <property type="match status" value="1"/>
</dbReference>
<dbReference type="PANTHER" id="PTHR42823:SF3">
    <property type="entry name" value="ATP SYNTHASE SUBUNIT A, CHLOROPLASTIC"/>
    <property type="match status" value="1"/>
</dbReference>
<dbReference type="Pfam" id="PF00119">
    <property type="entry name" value="ATP-synt_A"/>
    <property type="match status" value="1"/>
</dbReference>
<dbReference type="PRINTS" id="PR00123">
    <property type="entry name" value="ATPASEA"/>
</dbReference>
<dbReference type="SUPFAM" id="SSF81336">
    <property type="entry name" value="F1F0 ATP synthase subunit A"/>
    <property type="match status" value="1"/>
</dbReference>
<dbReference type="PROSITE" id="PS00449">
    <property type="entry name" value="ATPASE_A"/>
    <property type="match status" value="1"/>
</dbReference>